<organism>
    <name type="scientific">Brassica napus</name>
    <name type="common">Rape</name>
    <dbReference type="NCBI Taxonomy" id="3708"/>
    <lineage>
        <taxon>Eukaryota</taxon>
        <taxon>Viridiplantae</taxon>
        <taxon>Streptophyta</taxon>
        <taxon>Embryophyta</taxon>
        <taxon>Tracheophyta</taxon>
        <taxon>Spermatophyta</taxon>
        <taxon>Magnoliopsida</taxon>
        <taxon>eudicotyledons</taxon>
        <taxon>Gunneridae</taxon>
        <taxon>Pentapetalae</taxon>
        <taxon>rosids</taxon>
        <taxon>malvids</taxon>
        <taxon>Brassicales</taxon>
        <taxon>Brassicaceae</taxon>
        <taxon>Brassiceae</taxon>
        <taxon>Brassica</taxon>
    </lineage>
</organism>
<evidence type="ECO:0000250" key="1"/>
<evidence type="ECO:0000250" key="2">
    <source>
        <dbReference type="UniProtKB" id="P21238"/>
    </source>
</evidence>
<evidence type="ECO:0000305" key="3"/>
<reference key="1">
    <citation type="journal article" date="1990" name="Gene">
        <title>Unique composition of plastid chaperonin-60: alpha and beta polypeptide-encoding genes are highly divergent.</title>
        <authorList>
            <person name="Martel R."/>
            <person name="Cloney L.P."/>
            <person name="Pelcher L.E."/>
            <person name="Hemmingsen S.M."/>
        </authorList>
    </citation>
    <scope>NUCLEOTIDE SEQUENCE [MRNA]</scope>
    <source>
        <strain>cv. Westar</strain>
    </source>
</reference>
<keyword id="KW-0067">ATP-binding</keyword>
<keyword id="KW-0143">Chaperone</keyword>
<keyword id="KW-0150">Chloroplast</keyword>
<keyword id="KW-0547">Nucleotide-binding</keyword>
<keyword id="KW-0597">Phosphoprotein</keyword>
<keyword id="KW-0934">Plastid</keyword>
<keyword id="KW-0809">Transit peptide</keyword>
<proteinExistence type="evidence at transcript level"/>
<accession>P21239</accession>
<sequence>RFSVRANVKEISFDQSSRAALQAGIDKLADAVGLTLGPRGRNVVLDEFGSPKVVNDGVTIARAIELPDAMENAGAALIREVASKTNDSAGDGTTTASVLAREIIKHGLLSVTSGANPVSLKRGIDKTVQALIEELEKRARPVKGGSDIKAVATISAGNDELVGTMIADAIDKVGPDGVLSIESSSSFETTVEVEEGMEIDRGYISPQFVTNPEKLLVEFENARVLITDQKITAIKDIIPILEKTTQLRAPLLIIAEDVTGEALATLVVNKLRGVLNVVAVKAPGFGERRKAMLQDIAILTGAEYQALDMGLLVENTTIDQLGIARKVTISKDSTTLIADAASKDELQARISQLKKELSETDSVYDSEKLAERIAKLAGGVAVIKVGAATETELEDRKLRIEDAKNATFAAIEEGIVPGGGATLVHLSTVIPAIKEKLEDADERLGADIVQKALVAPAALIAQNAGIEGEVVVEKIMFSEWEIGYNAMTDTYENLLEAGVIDPAKVTRCALQNAASVAGMVLTTQAIVVDKPKPKAPTAAPPQGLMV</sequence>
<comment type="function">
    <text>This protein binds RuBisCO small and large subunits and is implicated in the assembly of the enzyme oligomer.</text>
</comment>
<comment type="subunit">
    <text>Oligomer of probably six alpha and six beta subunits.</text>
</comment>
<comment type="subcellular location">
    <subcellularLocation>
        <location>Plastid</location>
        <location>Chloroplast</location>
    </subcellularLocation>
</comment>
<comment type="miscellaneous">
    <text>This protein shows ATPase activity.</text>
</comment>
<comment type="similarity">
    <text evidence="3">Belongs to the chaperonin (HSP60) family.</text>
</comment>
<feature type="transit peptide" description="Chloroplast" evidence="1">
    <location>
        <begin position="1" status="less than"/>
        <end position="6"/>
    </location>
</feature>
<feature type="chain" id="PRO_0000005017" description="RuBisCO large subunit-binding protein subunit alpha, chloroplastic">
    <location>
        <begin position="7"/>
        <end position="546"/>
    </location>
</feature>
<feature type="modified residue" description="Phosphoserine" evidence="2">
    <location>
        <position position="50"/>
    </location>
</feature>
<feature type="non-terminal residue">
    <location>
        <position position="1"/>
    </location>
</feature>
<protein>
    <recommendedName>
        <fullName>RuBisCO large subunit-binding protein subunit alpha, chloroplastic</fullName>
    </recommendedName>
    <alternativeName>
        <fullName>60 kDa chaperonin subunit alpha</fullName>
    </alternativeName>
    <alternativeName>
        <fullName>CPN-60 alpha</fullName>
    </alternativeName>
</protein>
<name>RUB1_BRANA</name>
<dbReference type="EMBL" id="M35599">
    <property type="protein sequence ID" value="AAA32979.1"/>
    <property type="molecule type" value="mRNA"/>
</dbReference>
<dbReference type="PIR" id="PW0005">
    <property type="entry name" value="PW0005"/>
</dbReference>
<dbReference type="SMR" id="P21239"/>
<dbReference type="GO" id="GO:0009507">
    <property type="term" value="C:chloroplast"/>
    <property type="evidence" value="ECO:0007669"/>
    <property type="project" value="UniProtKB-SubCell"/>
</dbReference>
<dbReference type="GO" id="GO:0005524">
    <property type="term" value="F:ATP binding"/>
    <property type="evidence" value="ECO:0007669"/>
    <property type="project" value="UniProtKB-KW"/>
</dbReference>
<dbReference type="GO" id="GO:0140662">
    <property type="term" value="F:ATP-dependent protein folding chaperone"/>
    <property type="evidence" value="ECO:0007669"/>
    <property type="project" value="InterPro"/>
</dbReference>
<dbReference type="GO" id="GO:0042026">
    <property type="term" value="P:protein refolding"/>
    <property type="evidence" value="ECO:0007669"/>
    <property type="project" value="InterPro"/>
</dbReference>
<dbReference type="CDD" id="cd03344">
    <property type="entry name" value="GroEL"/>
    <property type="match status" value="1"/>
</dbReference>
<dbReference type="FunFam" id="3.50.7.10:FF:000001">
    <property type="entry name" value="60 kDa chaperonin"/>
    <property type="match status" value="1"/>
</dbReference>
<dbReference type="Gene3D" id="3.50.7.10">
    <property type="entry name" value="GroEL"/>
    <property type="match status" value="1"/>
</dbReference>
<dbReference type="Gene3D" id="1.10.560.10">
    <property type="entry name" value="GroEL-like equatorial domain"/>
    <property type="match status" value="1"/>
</dbReference>
<dbReference type="Gene3D" id="3.30.260.10">
    <property type="entry name" value="TCP-1-like chaperonin intermediate domain"/>
    <property type="match status" value="1"/>
</dbReference>
<dbReference type="HAMAP" id="MF_00600">
    <property type="entry name" value="CH60"/>
    <property type="match status" value="1"/>
</dbReference>
<dbReference type="InterPro" id="IPR018370">
    <property type="entry name" value="Chaperonin_Cpn60_CS"/>
</dbReference>
<dbReference type="InterPro" id="IPR001844">
    <property type="entry name" value="Cpn60/GroEL"/>
</dbReference>
<dbReference type="InterPro" id="IPR002423">
    <property type="entry name" value="Cpn60/GroEL/TCP-1"/>
</dbReference>
<dbReference type="InterPro" id="IPR027409">
    <property type="entry name" value="GroEL-like_apical_dom_sf"/>
</dbReference>
<dbReference type="InterPro" id="IPR027413">
    <property type="entry name" value="GROEL-like_equatorial_sf"/>
</dbReference>
<dbReference type="InterPro" id="IPR027410">
    <property type="entry name" value="TCP-1-like_intermed_sf"/>
</dbReference>
<dbReference type="NCBIfam" id="TIGR02348">
    <property type="entry name" value="GroEL"/>
    <property type="match status" value="1"/>
</dbReference>
<dbReference type="NCBIfam" id="NF000592">
    <property type="entry name" value="PRK00013.1"/>
    <property type="match status" value="1"/>
</dbReference>
<dbReference type="NCBIfam" id="NF009487">
    <property type="entry name" value="PRK12849.1"/>
    <property type="match status" value="1"/>
</dbReference>
<dbReference type="NCBIfam" id="NF009488">
    <property type="entry name" value="PRK12850.1"/>
    <property type="match status" value="1"/>
</dbReference>
<dbReference type="NCBIfam" id="NF009489">
    <property type="entry name" value="PRK12851.1"/>
    <property type="match status" value="1"/>
</dbReference>
<dbReference type="PANTHER" id="PTHR45633">
    <property type="entry name" value="60 KDA HEAT SHOCK PROTEIN, MITOCHONDRIAL"/>
    <property type="match status" value="1"/>
</dbReference>
<dbReference type="Pfam" id="PF00118">
    <property type="entry name" value="Cpn60_TCP1"/>
    <property type="match status" value="1"/>
</dbReference>
<dbReference type="PRINTS" id="PR00298">
    <property type="entry name" value="CHAPERONIN60"/>
</dbReference>
<dbReference type="SUPFAM" id="SSF52029">
    <property type="entry name" value="GroEL apical domain-like"/>
    <property type="match status" value="1"/>
</dbReference>
<dbReference type="SUPFAM" id="SSF48592">
    <property type="entry name" value="GroEL equatorial domain-like"/>
    <property type="match status" value="1"/>
</dbReference>
<dbReference type="SUPFAM" id="SSF54849">
    <property type="entry name" value="GroEL-intermediate domain like"/>
    <property type="match status" value="2"/>
</dbReference>
<dbReference type="PROSITE" id="PS00296">
    <property type="entry name" value="CHAPERONINS_CPN60"/>
    <property type="match status" value="1"/>
</dbReference>